<reference key="1">
    <citation type="journal article" date="2006" name="J. Bacteriol.">
        <title>Pathogenomic sequence analysis of Bacillus cereus and Bacillus thuringiensis isolates closely related to Bacillus anthracis.</title>
        <authorList>
            <person name="Han C.S."/>
            <person name="Xie G."/>
            <person name="Challacombe J.F."/>
            <person name="Altherr M.R."/>
            <person name="Bhotika S.S."/>
            <person name="Bruce D."/>
            <person name="Campbell C.S."/>
            <person name="Campbell M.L."/>
            <person name="Chen J."/>
            <person name="Chertkov O."/>
            <person name="Cleland C."/>
            <person name="Dimitrijevic M."/>
            <person name="Doggett N.A."/>
            <person name="Fawcett J.J."/>
            <person name="Glavina T."/>
            <person name="Goodwin L.A."/>
            <person name="Hill K.K."/>
            <person name="Hitchcock P."/>
            <person name="Jackson P.J."/>
            <person name="Keim P."/>
            <person name="Kewalramani A.R."/>
            <person name="Longmire J."/>
            <person name="Lucas S."/>
            <person name="Malfatti S."/>
            <person name="McMurry K."/>
            <person name="Meincke L.J."/>
            <person name="Misra M."/>
            <person name="Moseman B.L."/>
            <person name="Mundt M."/>
            <person name="Munk A.C."/>
            <person name="Okinaka R.T."/>
            <person name="Parson-Quintana B."/>
            <person name="Reilly L.P."/>
            <person name="Richardson P."/>
            <person name="Robinson D.L."/>
            <person name="Rubin E."/>
            <person name="Saunders E."/>
            <person name="Tapia R."/>
            <person name="Tesmer J.G."/>
            <person name="Thayer N."/>
            <person name="Thompson L.S."/>
            <person name="Tice H."/>
            <person name="Ticknor L.O."/>
            <person name="Wills P.L."/>
            <person name="Brettin T.S."/>
            <person name="Gilna P."/>
        </authorList>
    </citation>
    <scope>NUCLEOTIDE SEQUENCE [LARGE SCALE GENOMIC DNA]</scope>
    <source>
        <strain>ZK / E33L</strain>
    </source>
</reference>
<dbReference type="EC" id="2.8.4.3" evidence="1"/>
<dbReference type="EMBL" id="CP000001">
    <property type="protein sequence ID" value="AAU16735.1"/>
    <property type="molecule type" value="Genomic_DNA"/>
</dbReference>
<dbReference type="RefSeq" id="WP_001005404.1">
    <property type="nucleotide sequence ID" value="NZ_CP009968.1"/>
</dbReference>
<dbReference type="SMR" id="Q636Q4"/>
<dbReference type="KEGG" id="bcz:BCE33L3531"/>
<dbReference type="PATRIC" id="fig|288681.22.peg.1879"/>
<dbReference type="Proteomes" id="UP000002612">
    <property type="component" value="Chromosome"/>
</dbReference>
<dbReference type="GO" id="GO:0005829">
    <property type="term" value="C:cytosol"/>
    <property type="evidence" value="ECO:0007669"/>
    <property type="project" value="TreeGrafter"/>
</dbReference>
<dbReference type="GO" id="GO:0051539">
    <property type="term" value="F:4 iron, 4 sulfur cluster binding"/>
    <property type="evidence" value="ECO:0007669"/>
    <property type="project" value="UniProtKB-UniRule"/>
</dbReference>
<dbReference type="GO" id="GO:0046872">
    <property type="term" value="F:metal ion binding"/>
    <property type="evidence" value="ECO:0007669"/>
    <property type="project" value="UniProtKB-KW"/>
</dbReference>
<dbReference type="GO" id="GO:0035597">
    <property type="term" value="F:N6-isopentenyladenosine methylthiotransferase activity"/>
    <property type="evidence" value="ECO:0007669"/>
    <property type="project" value="TreeGrafter"/>
</dbReference>
<dbReference type="CDD" id="cd01335">
    <property type="entry name" value="Radical_SAM"/>
    <property type="match status" value="1"/>
</dbReference>
<dbReference type="FunFam" id="3.40.50.12160:FF:000006">
    <property type="entry name" value="tRNA-2-methylthio-N(6)-dimethylallyladenosine synthase"/>
    <property type="match status" value="1"/>
</dbReference>
<dbReference type="FunFam" id="3.80.30.20:FF:000001">
    <property type="entry name" value="tRNA-2-methylthio-N(6)-dimethylallyladenosine synthase 2"/>
    <property type="match status" value="1"/>
</dbReference>
<dbReference type="Gene3D" id="3.40.50.12160">
    <property type="entry name" value="Methylthiotransferase, N-terminal domain"/>
    <property type="match status" value="1"/>
</dbReference>
<dbReference type="Gene3D" id="3.80.30.20">
    <property type="entry name" value="tm_1862 like domain"/>
    <property type="match status" value="1"/>
</dbReference>
<dbReference type="HAMAP" id="MF_01864">
    <property type="entry name" value="tRNA_metthiotr_MiaB"/>
    <property type="match status" value="1"/>
</dbReference>
<dbReference type="InterPro" id="IPR006638">
    <property type="entry name" value="Elp3/MiaA/NifB-like_rSAM"/>
</dbReference>
<dbReference type="InterPro" id="IPR005839">
    <property type="entry name" value="Methylthiotransferase"/>
</dbReference>
<dbReference type="InterPro" id="IPR020612">
    <property type="entry name" value="Methylthiotransferase_CS"/>
</dbReference>
<dbReference type="InterPro" id="IPR013848">
    <property type="entry name" value="Methylthiotransferase_N"/>
</dbReference>
<dbReference type="InterPro" id="IPR038135">
    <property type="entry name" value="Methylthiotransferase_N_sf"/>
</dbReference>
<dbReference type="InterPro" id="IPR006463">
    <property type="entry name" value="MiaB_methiolase"/>
</dbReference>
<dbReference type="InterPro" id="IPR007197">
    <property type="entry name" value="rSAM"/>
</dbReference>
<dbReference type="InterPro" id="IPR023404">
    <property type="entry name" value="rSAM_horseshoe"/>
</dbReference>
<dbReference type="InterPro" id="IPR002792">
    <property type="entry name" value="TRAM_dom"/>
</dbReference>
<dbReference type="NCBIfam" id="TIGR01574">
    <property type="entry name" value="miaB-methiolase"/>
    <property type="match status" value="1"/>
</dbReference>
<dbReference type="NCBIfam" id="TIGR00089">
    <property type="entry name" value="MiaB/RimO family radical SAM methylthiotransferase"/>
    <property type="match status" value="1"/>
</dbReference>
<dbReference type="PANTHER" id="PTHR43020">
    <property type="entry name" value="CDK5 REGULATORY SUBUNIT-ASSOCIATED PROTEIN 1"/>
    <property type="match status" value="1"/>
</dbReference>
<dbReference type="PANTHER" id="PTHR43020:SF2">
    <property type="entry name" value="MITOCHONDRIAL TRNA METHYLTHIOTRANSFERASE CDK5RAP1"/>
    <property type="match status" value="1"/>
</dbReference>
<dbReference type="Pfam" id="PF04055">
    <property type="entry name" value="Radical_SAM"/>
    <property type="match status" value="1"/>
</dbReference>
<dbReference type="Pfam" id="PF01938">
    <property type="entry name" value="TRAM"/>
    <property type="match status" value="1"/>
</dbReference>
<dbReference type="Pfam" id="PF00919">
    <property type="entry name" value="UPF0004"/>
    <property type="match status" value="1"/>
</dbReference>
<dbReference type="SFLD" id="SFLDF00273">
    <property type="entry name" value="(dimethylallyl)adenosine_tRNA"/>
    <property type="match status" value="1"/>
</dbReference>
<dbReference type="SFLD" id="SFLDG01082">
    <property type="entry name" value="B12-binding_domain_containing"/>
    <property type="match status" value="1"/>
</dbReference>
<dbReference type="SFLD" id="SFLDS00029">
    <property type="entry name" value="Radical_SAM"/>
    <property type="match status" value="1"/>
</dbReference>
<dbReference type="SMART" id="SM00729">
    <property type="entry name" value="Elp3"/>
    <property type="match status" value="1"/>
</dbReference>
<dbReference type="SUPFAM" id="SSF102114">
    <property type="entry name" value="Radical SAM enzymes"/>
    <property type="match status" value="1"/>
</dbReference>
<dbReference type="PROSITE" id="PS51449">
    <property type="entry name" value="MTTASE_N"/>
    <property type="match status" value="1"/>
</dbReference>
<dbReference type="PROSITE" id="PS01278">
    <property type="entry name" value="MTTASE_RADICAL"/>
    <property type="match status" value="1"/>
</dbReference>
<dbReference type="PROSITE" id="PS51918">
    <property type="entry name" value="RADICAL_SAM"/>
    <property type="match status" value="1"/>
</dbReference>
<dbReference type="PROSITE" id="PS50926">
    <property type="entry name" value="TRAM"/>
    <property type="match status" value="1"/>
</dbReference>
<accession>Q636Q4</accession>
<organism>
    <name type="scientific">Bacillus cereus (strain ZK / E33L)</name>
    <dbReference type="NCBI Taxonomy" id="288681"/>
    <lineage>
        <taxon>Bacteria</taxon>
        <taxon>Bacillati</taxon>
        <taxon>Bacillota</taxon>
        <taxon>Bacilli</taxon>
        <taxon>Bacillales</taxon>
        <taxon>Bacillaceae</taxon>
        <taxon>Bacillus</taxon>
        <taxon>Bacillus cereus group</taxon>
    </lineage>
</organism>
<gene>
    <name evidence="1" type="primary">miaB</name>
    <name type="ordered locus">BCE33L3531</name>
</gene>
<comment type="function">
    <text evidence="1">Catalyzes the methylthiolation of N6-(dimethylallyl)adenosine (i(6)A), leading to the formation of 2-methylthio-N6-(dimethylallyl)adenosine (ms(2)i(6)A) at position 37 in tRNAs that read codons beginning with uridine.</text>
</comment>
<comment type="catalytic activity">
    <reaction evidence="1">
        <text>N(6)-dimethylallyladenosine(37) in tRNA + (sulfur carrier)-SH + AH2 + 2 S-adenosyl-L-methionine = 2-methylsulfanyl-N(6)-dimethylallyladenosine(37) in tRNA + (sulfur carrier)-H + 5'-deoxyadenosine + L-methionine + A + S-adenosyl-L-homocysteine + 2 H(+)</text>
        <dbReference type="Rhea" id="RHEA:37067"/>
        <dbReference type="Rhea" id="RHEA-COMP:10375"/>
        <dbReference type="Rhea" id="RHEA-COMP:10376"/>
        <dbReference type="Rhea" id="RHEA-COMP:14737"/>
        <dbReference type="Rhea" id="RHEA-COMP:14739"/>
        <dbReference type="ChEBI" id="CHEBI:13193"/>
        <dbReference type="ChEBI" id="CHEBI:15378"/>
        <dbReference type="ChEBI" id="CHEBI:17319"/>
        <dbReference type="ChEBI" id="CHEBI:17499"/>
        <dbReference type="ChEBI" id="CHEBI:29917"/>
        <dbReference type="ChEBI" id="CHEBI:57844"/>
        <dbReference type="ChEBI" id="CHEBI:57856"/>
        <dbReference type="ChEBI" id="CHEBI:59789"/>
        <dbReference type="ChEBI" id="CHEBI:64428"/>
        <dbReference type="ChEBI" id="CHEBI:74415"/>
        <dbReference type="ChEBI" id="CHEBI:74417"/>
        <dbReference type="EC" id="2.8.4.3"/>
    </reaction>
</comment>
<comment type="cofactor">
    <cofactor evidence="1">
        <name>[4Fe-4S] cluster</name>
        <dbReference type="ChEBI" id="CHEBI:49883"/>
    </cofactor>
    <text evidence="1">Binds 2 [4Fe-4S] clusters. One cluster is coordinated with 3 cysteines and an exchangeable S-adenosyl-L-methionine.</text>
</comment>
<comment type="subunit">
    <text evidence="1">Monomer.</text>
</comment>
<comment type="subcellular location">
    <subcellularLocation>
        <location evidence="1">Cytoplasm</location>
    </subcellularLocation>
</comment>
<comment type="similarity">
    <text evidence="1">Belongs to the methylthiotransferase family. MiaB subfamily.</text>
</comment>
<feature type="chain" id="PRO_0000374131" description="tRNA-2-methylthio-N(6)-dimethylallyladenosine synthase">
    <location>
        <begin position="1"/>
        <end position="509"/>
    </location>
</feature>
<feature type="domain" description="MTTase N-terminal" evidence="1">
    <location>
        <begin position="66"/>
        <end position="184"/>
    </location>
</feature>
<feature type="domain" description="Radical SAM core" evidence="2">
    <location>
        <begin position="207"/>
        <end position="437"/>
    </location>
</feature>
<feature type="domain" description="TRAM" evidence="1">
    <location>
        <begin position="440"/>
        <end position="503"/>
    </location>
</feature>
<feature type="region of interest" description="Disordered" evidence="3">
    <location>
        <begin position="1"/>
        <end position="26"/>
    </location>
</feature>
<feature type="compositionally biased region" description="Polar residues" evidence="3">
    <location>
        <begin position="1"/>
        <end position="15"/>
    </location>
</feature>
<feature type="compositionally biased region" description="Basic and acidic residues" evidence="3">
    <location>
        <begin position="16"/>
        <end position="25"/>
    </location>
</feature>
<feature type="binding site" evidence="1">
    <location>
        <position position="75"/>
    </location>
    <ligand>
        <name>[4Fe-4S] cluster</name>
        <dbReference type="ChEBI" id="CHEBI:49883"/>
        <label>1</label>
    </ligand>
</feature>
<feature type="binding site" evidence="1">
    <location>
        <position position="111"/>
    </location>
    <ligand>
        <name>[4Fe-4S] cluster</name>
        <dbReference type="ChEBI" id="CHEBI:49883"/>
        <label>1</label>
    </ligand>
</feature>
<feature type="binding site" evidence="1">
    <location>
        <position position="145"/>
    </location>
    <ligand>
        <name>[4Fe-4S] cluster</name>
        <dbReference type="ChEBI" id="CHEBI:49883"/>
        <label>1</label>
    </ligand>
</feature>
<feature type="binding site" evidence="1">
    <location>
        <position position="221"/>
    </location>
    <ligand>
        <name>[4Fe-4S] cluster</name>
        <dbReference type="ChEBI" id="CHEBI:49883"/>
        <label>2</label>
        <note>4Fe-4S-S-AdoMet</note>
    </ligand>
</feature>
<feature type="binding site" evidence="1">
    <location>
        <position position="225"/>
    </location>
    <ligand>
        <name>[4Fe-4S] cluster</name>
        <dbReference type="ChEBI" id="CHEBI:49883"/>
        <label>2</label>
        <note>4Fe-4S-S-AdoMet</note>
    </ligand>
</feature>
<feature type="binding site" evidence="1">
    <location>
        <position position="228"/>
    </location>
    <ligand>
        <name>[4Fe-4S] cluster</name>
        <dbReference type="ChEBI" id="CHEBI:49883"/>
        <label>2</label>
        <note>4Fe-4S-S-AdoMet</note>
    </ligand>
</feature>
<proteinExistence type="inferred from homology"/>
<sequence>MNEQQRLASQQVNSSTKKEEKDYSKYFESVYQPPSLKEAKKRGKEEVKIERDFGLPEEFRNFGTGRKFYIRTYGCQMNEHDTEVMAGIFTALGYEPTFSTEDADVVLLNTCAIRENAENKVFGELGHLKALKRRNPDLLIGVCGCMSQEESVVNKIMQKNQHVDMVFGTHNIHRLPYILKDAMFSKETVVEVWSKEGDVIENLPKVRRGDIKAWVNIMYGCDKFCTYCIVPYTRGKERSRRPEDIIQEIRHLAANGYKEITLLGQNVNAYGKDFEDIEYGLGDLMDELRKVDIARIRFTTSHPRDFDDHLIEVLGKGGNLVEHIHLPVQSGSTEMLKIMARKYSREHYLELVRKIKEAIPNAVLTTDIIVGFPNETDEQFEETMSLYREVGFDTAFTFIYSPREGTPAAKMKDNVPMEVKKERLQRLNALVNKLAIEKNDRYKGQIVEVLVDGESKNNPEVLAGYTRTNKLVNFVAPKSLIGQLVKVKVTDAKTWSLNGELVEEPIEVE</sequence>
<evidence type="ECO:0000255" key="1">
    <source>
        <dbReference type="HAMAP-Rule" id="MF_01864"/>
    </source>
</evidence>
<evidence type="ECO:0000255" key="2">
    <source>
        <dbReference type="PROSITE-ProRule" id="PRU01266"/>
    </source>
</evidence>
<evidence type="ECO:0000256" key="3">
    <source>
        <dbReference type="SAM" id="MobiDB-lite"/>
    </source>
</evidence>
<keyword id="KW-0004">4Fe-4S</keyword>
<keyword id="KW-0963">Cytoplasm</keyword>
<keyword id="KW-0408">Iron</keyword>
<keyword id="KW-0411">Iron-sulfur</keyword>
<keyword id="KW-0479">Metal-binding</keyword>
<keyword id="KW-0949">S-adenosyl-L-methionine</keyword>
<keyword id="KW-0808">Transferase</keyword>
<keyword id="KW-0819">tRNA processing</keyword>
<name>MIAB_BACCZ</name>
<protein>
    <recommendedName>
        <fullName evidence="1">tRNA-2-methylthio-N(6)-dimethylallyladenosine synthase</fullName>
        <ecNumber evidence="1">2.8.4.3</ecNumber>
    </recommendedName>
    <alternativeName>
        <fullName evidence="1">(Dimethylallyl)adenosine tRNA methylthiotransferase MiaB</fullName>
    </alternativeName>
    <alternativeName>
        <fullName evidence="1">tRNA-i(6)A37 methylthiotransferase</fullName>
    </alternativeName>
</protein>